<accession>Q0U2C0</accession>
<name>ATP25_PHANO</name>
<dbReference type="EMBL" id="CH445353">
    <property type="protein sequence ID" value="EAT78622.2"/>
    <property type="molecule type" value="Genomic_DNA"/>
</dbReference>
<dbReference type="RefSeq" id="XP_001804196.1">
    <property type="nucleotide sequence ID" value="XM_001804144.1"/>
</dbReference>
<dbReference type="SMR" id="Q0U2C0"/>
<dbReference type="FunCoup" id="Q0U2C0">
    <property type="interactions" value="48"/>
</dbReference>
<dbReference type="STRING" id="321614.Q0U2C0"/>
<dbReference type="EnsemblFungi" id="SNOT_13997">
    <property type="protein sequence ID" value="SNOT_13997"/>
    <property type="gene ID" value="SNOG_13997"/>
</dbReference>
<dbReference type="GeneID" id="5981119"/>
<dbReference type="KEGG" id="pno:SNOG_13997"/>
<dbReference type="VEuPathDB" id="FungiDB:JI435_139970"/>
<dbReference type="VEuPathDB" id="FungiDB:JI435_434570"/>
<dbReference type="eggNOG" id="ENOG502RGZN">
    <property type="taxonomic scope" value="Eukaryota"/>
</dbReference>
<dbReference type="HOGENOM" id="CLU_685328_0_0_1"/>
<dbReference type="InParanoid" id="Q0U2C0"/>
<dbReference type="Proteomes" id="UP000001055">
    <property type="component" value="Unassembled WGS sequence"/>
</dbReference>
<dbReference type="GO" id="GO:0005743">
    <property type="term" value="C:mitochondrial inner membrane"/>
    <property type="evidence" value="ECO:0007669"/>
    <property type="project" value="UniProtKB-SubCell"/>
</dbReference>
<dbReference type="GO" id="GO:0140053">
    <property type="term" value="P:mitochondrial gene expression"/>
    <property type="evidence" value="ECO:0007669"/>
    <property type="project" value="InterPro"/>
</dbReference>
<dbReference type="FunFam" id="3.30.460.10:FF:000044">
    <property type="entry name" value="ATPase synthesis protein 25, mitochondrial"/>
    <property type="match status" value="1"/>
</dbReference>
<dbReference type="Gene3D" id="3.30.460.10">
    <property type="entry name" value="Beta Polymerase, domain 2"/>
    <property type="match status" value="1"/>
</dbReference>
<dbReference type="InterPro" id="IPR040152">
    <property type="entry name" value="Atp25"/>
</dbReference>
<dbReference type="InterPro" id="IPR043519">
    <property type="entry name" value="NT_sf"/>
</dbReference>
<dbReference type="PANTHER" id="PTHR28087">
    <property type="entry name" value="ATPASE SYNTHESIS PROTEIN 25, MITOCHONDRIAL"/>
    <property type="match status" value="1"/>
</dbReference>
<dbReference type="PANTHER" id="PTHR28087:SF1">
    <property type="entry name" value="ATPASE SYNTHESIS PROTEIN 25, MITOCHONDRIAL"/>
    <property type="match status" value="1"/>
</dbReference>
<dbReference type="Pfam" id="PF02410">
    <property type="entry name" value="RsfS"/>
    <property type="match status" value="1"/>
</dbReference>
<evidence type="ECO:0000250" key="1"/>
<evidence type="ECO:0000255" key="2"/>
<evidence type="ECO:0000256" key="3">
    <source>
        <dbReference type="SAM" id="MobiDB-lite"/>
    </source>
</evidence>
<evidence type="ECO:0000305" key="4"/>
<sequence>MAKDRDDPAVEDPEFAFLDDSTKSSTNTAHTEEPISVADTELNTSVAEASVETSSAAAPKSSAVDTSIPWYLRQNPAARDAQKPIEIPDLPPNPPPLLKTILEYISITAGLDDLELLDLRHLDPPPALGPKLIMIIATARSEKHLHVAADGFARFLRREHGLKANAAGLLGRNELKIKLRRKAKRMRMLANVGGAVPEGNLDDGIRTGWICCTLSKIEAHPDDMHLPGDNVDEFVGFRSVNPGVNVVVQMFTEEKRVETDLETLWGGVLKTQRREGTVAEEKLKELDEDVEAQESAEVPLISRQEEETETPASPHASVIWNRVAITFLYNDTDTQHSSRTNKALVTLLADFIMSKSADDYHKDFIELSLKKVLMNQRGHTIRRKKDSEEAIRKADLVELAMA</sequence>
<feature type="transit peptide" description="Mitochondrion" evidence="2">
    <location>
        <begin position="1"/>
        <end position="32"/>
    </location>
</feature>
<feature type="chain" id="PRO_0000404483" description="ATPase synthesis protein 25, mitochondrial">
    <location>
        <begin position="33"/>
        <end position="402"/>
    </location>
</feature>
<feature type="region of interest" description="Disordered" evidence="3">
    <location>
        <begin position="1"/>
        <end position="60"/>
    </location>
</feature>
<feature type="compositionally biased region" description="Low complexity" evidence="3">
    <location>
        <begin position="44"/>
        <end position="58"/>
    </location>
</feature>
<proteinExistence type="inferred from homology"/>
<gene>
    <name type="primary">ATP25</name>
    <name type="ORF">SNOG_13997</name>
</gene>
<reference key="1">
    <citation type="journal article" date="2007" name="Plant Cell">
        <title>Dothideomycete-plant interactions illuminated by genome sequencing and EST analysis of the wheat pathogen Stagonospora nodorum.</title>
        <authorList>
            <person name="Hane J.K."/>
            <person name="Lowe R.G.T."/>
            <person name="Solomon P.S."/>
            <person name="Tan K.-C."/>
            <person name="Schoch C.L."/>
            <person name="Spatafora J.W."/>
            <person name="Crous P.W."/>
            <person name="Kodira C.D."/>
            <person name="Birren B.W."/>
            <person name="Galagan J.E."/>
            <person name="Torriani S.F.F."/>
            <person name="McDonald B.A."/>
            <person name="Oliver R.P."/>
        </authorList>
    </citation>
    <scope>NUCLEOTIDE SEQUENCE [LARGE SCALE GENOMIC DNA]</scope>
    <source>
        <strain>SN15 / ATCC MYA-4574 / FGSC 10173</strain>
    </source>
</reference>
<protein>
    <recommendedName>
        <fullName>ATPase synthesis protein 25, mitochondrial</fullName>
    </recommendedName>
</protein>
<comment type="function">
    <text evidence="1">Probable mitochondrial mRNA stabilization factor.</text>
</comment>
<comment type="subcellular location">
    <subcellularLocation>
        <location evidence="1">Mitochondrion inner membrane</location>
        <topology evidence="1">Peripheral membrane protein</topology>
        <orientation evidence="1">Matrix side</orientation>
    </subcellularLocation>
</comment>
<comment type="similarity">
    <text evidence="4">Belongs to the ATP25 family.</text>
</comment>
<keyword id="KW-0472">Membrane</keyword>
<keyword id="KW-0496">Mitochondrion</keyword>
<keyword id="KW-0999">Mitochondrion inner membrane</keyword>
<keyword id="KW-0809">Transit peptide</keyword>
<organism>
    <name type="scientific">Phaeosphaeria nodorum (strain SN15 / ATCC MYA-4574 / FGSC 10173)</name>
    <name type="common">Glume blotch fungus</name>
    <name type="synonym">Parastagonospora nodorum</name>
    <dbReference type="NCBI Taxonomy" id="321614"/>
    <lineage>
        <taxon>Eukaryota</taxon>
        <taxon>Fungi</taxon>
        <taxon>Dikarya</taxon>
        <taxon>Ascomycota</taxon>
        <taxon>Pezizomycotina</taxon>
        <taxon>Dothideomycetes</taxon>
        <taxon>Pleosporomycetidae</taxon>
        <taxon>Pleosporales</taxon>
        <taxon>Pleosporineae</taxon>
        <taxon>Phaeosphaeriaceae</taxon>
        <taxon>Parastagonospora</taxon>
    </lineage>
</organism>